<gene>
    <name evidence="1" type="primary">ispH</name>
    <name type="synonym">lytB</name>
    <name type="ordered locus">R00912</name>
    <name type="ORF">SMc00016</name>
</gene>
<feature type="chain" id="PRO_0000128863" description="4-hydroxy-3-methylbut-2-enyl diphosphate reductase">
    <location>
        <begin position="1"/>
        <end position="350"/>
    </location>
</feature>
<feature type="active site" description="Proton donor" evidence="1">
    <location>
        <position position="153"/>
    </location>
</feature>
<feature type="binding site" evidence="1">
    <location>
        <position position="36"/>
    </location>
    <ligand>
        <name>[4Fe-4S] cluster</name>
        <dbReference type="ChEBI" id="CHEBI:49883"/>
    </ligand>
</feature>
<feature type="binding site" evidence="1">
    <location>
        <position position="65"/>
    </location>
    <ligand>
        <name>(2E)-4-hydroxy-3-methylbut-2-enyl diphosphate</name>
        <dbReference type="ChEBI" id="CHEBI:128753"/>
    </ligand>
</feature>
<feature type="binding site" evidence="1">
    <location>
        <position position="65"/>
    </location>
    <ligand>
        <name>dimethylallyl diphosphate</name>
        <dbReference type="ChEBI" id="CHEBI:57623"/>
    </ligand>
</feature>
<feature type="binding site" evidence="1">
    <location>
        <position position="65"/>
    </location>
    <ligand>
        <name>isopentenyl diphosphate</name>
        <dbReference type="ChEBI" id="CHEBI:128769"/>
    </ligand>
</feature>
<feature type="binding site" evidence="1">
    <location>
        <position position="101"/>
    </location>
    <ligand>
        <name>(2E)-4-hydroxy-3-methylbut-2-enyl diphosphate</name>
        <dbReference type="ChEBI" id="CHEBI:128753"/>
    </ligand>
</feature>
<feature type="binding site" evidence="1">
    <location>
        <position position="101"/>
    </location>
    <ligand>
        <name>dimethylallyl diphosphate</name>
        <dbReference type="ChEBI" id="CHEBI:57623"/>
    </ligand>
</feature>
<feature type="binding site" evidence="1">
    <location>
        <position position="101"/>
    </location>
    <ligand>
        <name>isopentenyl diphosphate</name>
        <dbReference type="ChEBI" id="CHEBI:128769"/>
    </ligand>
</feature>
<feature type="binding site" evidence="1">
    <location>
        <position position="123"/>
    </location>
    <ligand>
        <name>[4Fe-4S] cluster</name>
        <dbReference type="ChEBI" id="CHEBI:49883"/>
    </ligand>
</feature>
<feature type="binding site" evidence="1">
    <location>
        <position position="151"/>
    </location>
    <ligand>
        <name>(2E)-4-hydroxy-3-methylbut-2-enyl diphosphate</name>
        <dbReference type="ChEBI" id="CHEBI:128753"/>
    </ligand>
</feature>
<feature type="binding site" evidence="1">
    <location>
        <position position="151"/>
    </location>
    <ligand>
        <name>dimethylallyl diphosphate</name>
        <dbReference type="ChEBI" id="CHEBI:57623"/>
    </ligand>
</feature>
<feature type="binding site" evidence="1">
    <location>
        <position position="151"/>
    </location>
    <ligand>
        <name>isopentenyl diphosphate</name>
        <dbReference type="ChEBI" id="CHEBI:128769"/>
    </ligand>
</feature>
<feature type="binding site" evidence="1">
    <location>
        <position position="192"/>
    </location>
    <ligand>
        <name>(2E)-4-hydroxy-3-methylbut-2-enyl diphosphate</name>
        <dbReference type="ChEBI" id="CHEBI:128753"/>
    </ligand>
</feature>
<feature type="binding site" evidence="1">
    <location>
        <position position="222"/>
    </location>
    <ligand>
        <name>[4Fe-4S] cluster</name>
        <dbReference type="ChEBI" id="CHEBI:49883"/>
    </ligand>
</feature>
<feature type="binding site" evidence="1">
    <location>
        <position position="250"/>
    </location>
    <ligand>
        <name>(2E)-4-hydroxy-3-methylbut-2-enyl diphosphate</name>
        <dbReference type="ChEBI" id="CHEBI:128753"/>
    </ligand>
</feature>
<feature type="binding site" evidence="1">
    <location>
        <position position="250"/>
    </location>
    <ligand>
        <name>dimethylallyl diphosphate</name>
        <dbReference type="ChEBI" id="CHEBI:57623"/>
    </ligand>
</feature>
<feature type="binding site" evidence="1">
    <location>
        <position position="250"/>
    </location>
    <ligand>
        <name>isopentenyl diphosphate</name>
        <dbReference type="ChEBI" id="CHEBI:128769"/>
    </ligand>
</feature>
<feature type="binding site" evidence="1">
    <location>
        <position position="251"/>
    </location>
    <ligand>
        <name>(2E)-4-hydroxy-3-methylbut-2-enyl diphosphate</name>
        <dbReference type="ChEBI" id="CHEBI:128753"/>
    </ligand>
</feature>
<feature type="binding site" evidence="1">
    <location>
        <position position="251"/>
    </location>
    <ligand>
        <name>dimethylallyl diphosphate</name>
        <dbReference type="ChEBI" id="CHEBI:57623"/>
    </ligand>
</feature>
<feature type="binding site" evidence="1">
    <location>
        <position position="251"/>
    </location>
    <ligand>
        <name>isopentenyl diphosphate</name>
        <dbReference type="ChEBI" id="CHEBI:128769"/>
    </ligand>
</feature>
<feature type="binding site" evidence="1">
    <location>
        <position position="252"/>
    </location>
    <ligand>
        <name>(2E)-4-hydroxy-3-methylbut-2-enyl diphosphate</name>
        <dbReference type="ChEBI" id="CHEBI:128753"/>
    </ligand>
</feature>
<feature type="binding site" evidence="1">
    <location>
        <position position="252"/>
    </location>
    <ligand>
        <name>dimethylallyl diphosphate</name>
        <dbReference type="ChEBI" id="CHEBI:57623"/>
    </ligand>
</feature>
<feature type="binding site" evidence="1">
    <location>
        <position position="252"/>
    </location>
    <ligand>
        <name>isopentenyl diphosphate</name>
        <dbReference type="ChEBI" id="CHEBI:128769"/>
    </ligand>
</feature>
<feature type="binding site" evidence="1">
    <location>
        <position position="295"/>
    </location>
    <ligand>
        <name>(2E)-4-hydroxy-3-methylbut-2-enyl diphosphate</name>
        <dbReference type="ChEBI" id="CHEBI:128753"/>
    </ligand>
</feature>
<feature type="binding site" evidence="1">
    <location>
        <position position="295"/>
    </location>
    <ligand>
        <name>dimethylallyl diphosphate</name>
        <dbReference type="ChEBI" id="CHEBI:57623"/>
    </ligand>
</feature>
<feature type="binding site" evidence="1">
    <location>
        <position position="295"/>
    </location>
    <ligand>
        <name>isopentenyl diphosphate</name>
        <dbReference type="ChEBI" id="CHEBI:128769"/>
    </ligand>
</feature>
<dbReference type="EC" id="1.17.7.4" evidence="1"/>
<dbReference type="EMBL" id="AL591688">
    <property type="protein sequence ID" value="CAC45484.1"/>
    <property type="molecule type" value="Genomic_DNA"/>
</dbReference>
<dbReference type="RefSeq" id="NP_385018.1">
    <property type="nucleotide sequence ID" value="NC_003047.1"/>
</dbReference>
<dbReference type="SMR" id="Q92RG2"/>
<dbReference type="EnsemblBacteria" id="CAC45484">
    <property type="protein sequence ID" value="CAC45484"/>
    <property type="gene ID" value="SMc00016"/>
</dbReference>
<dbReference type="KEGG" id="sme:SMc00016"/>
<dbReference type="PATRIC" id="fig|266834.11.peg.2310"/>
<dbReference type="eggNOG" id="COG0761">
    <property type="taxonomic scope" value="Bacteria"/>
</dbReference>
<dbReference type="HOGENOM" id="CLU_027486_1_0_5"/>
<dbReference type="OrthoDB" id="9804068at2"/>
<dbReference type="UniPathway" id="UPA00056">
    <property type="reaction ID" value="UER00097"/>
</dbReference>
<dbReference type="UniPathway" id="UPA00059">
    <property type="reaction ID" value="UER00105"/>
</dbReference>
<dbReference type="Proteomes" id="UP000001976">
    <property type="component" value="Chromosome"/>
</dbReference>
<dbReference type="GO" id="GO:0051539">
    <property type="term" value="F:4 iron, 4 sulfur cluster binding"/>
    <property type="evidence" value="ECO:0007669"/>
    <property type="project" value="UniProtKB-UniRule"/>
</dbReference>
<dbReference type="GO" id="GO:0051745">
    <property type="term" value="F:4-hydroxy-3-methylbut-2-enyl diphosphate reductase activity"/>
    <property type="evidence" value="ECO:0007669"/>
    <property type="project" value="UniProtKB-UniRule"/>
</dbReference>
<dbReference type="GO" id="GO:0046872">
    <property type="term" value="F:metal ion binding"/>
    <property type="evidence" value="ECO:0007669"/>
    <property type="project" value="UniProtKB-KW"/>
</dbReference>
<dbReference type="GO" id="GO:0050992">
    <property type="term" value="P:dimethylallyl diphosphate biosynthetic process"/>
    <property type="evidence" value="ECO:0007669"/>
    <property type="project" value="UniProtKB-UniRule"/>
</dbReference>
<dbReference type="GO" id="GO:0019288">
    <property type="term" value="P:isopentenyl diphosphate biosynthetic process, methylerythritol 4-phosphate pathway"/>
    <property type="evidence" value="ECO:0007669"/>
    <property type="project" value="UniProtKB-UniRule"/>
</dbReference>
<dbReference type="GO" id="GO:0016114">
    <property type="term" value="P:terpenoid biosynthetic process"/>
    <property type="evidence" value="ECO:0007669"/>
    <property type="project" value="UniProtKB-UniRule"/>
</dbReference>
<dbReference type="CDD" id="cd13944">
    <property type="entry name" value="lytB_ispH"/>
    <property type="match status" value="1"/>
</dbReference>
<dbReference type="Gene3D" id="3.40.50.11270">
    <property type="match status" value="1"/>
</dbReference>
<dbReference type="Gene3D" id="3.40.1010.20">
    <property type="entry name" value="4-hydroxy-3-methylbut-2-enyl diphosphate reductase, catalytic domain"/>
    <property type="match status" value="2"/>
</dbReference>
<dbReference type="HAMAP" id="MF_00191">
    <property type="entry name" value="IspH"/>
    <property type="match status" value="1"/>
</dbReference>
<dbReference type="InterPro" id="IPR003451">
    <property type="entry name" value="LytB/IspH"/>
</dbReference>
<dbReference type="NCBIfam" id="TIGR00216">
    <property type="entry name" value="ispH_lytB"/>
    <property type="match status" value="1"/>
</dbReference>
<dbReference type="NCBIfam" id="NF002190">
    <property type="entry name" value="PRK01045.1-4"/>
    <property type="match status" value="1"/>
</dbReference>
<dbReference type="PANTHER" id="PTHR30426">
    <property type="entry name" value="4-HYDROXY-3-METHYLBUT-2-ENYL DIPHOSPHATE REDUCTASE"/>
    <property type="match status" value="1"/>
</dbReference>
<dbReference type="PANTHER" id="PTHR30426:SF0">
    <property type="entry name" value="4-HYDROXY-3-METHYLBUT-2-ENYL DIPHOSPHATE REDUCTASE"/>
    <property type="match status" value="1"/>
</dbReference>
<dbReference type="Pfam" id="PF02401">
    <property type="entry name" value="LYTB"/>
    <property type="match status" value="1"/>
</dbReference>
<accession>Q92RG2</accession>
<sequence length="350" mass="37832">MPTSGFVRSTGVFMMAPSAAAKTPITIRLCGPRGFCAGVDRAIQIVVLALKEFGAPVYVRHEIVHNRYVVEGLEAKGAIFVEELDEIPPEHRKQPVVFSAHGVPKSVPADADERNLFYLDATCPLVSKVHKQAMRHHRMGRHVVLIGHAGHPEVIGTMGQLPEGAVSLVETVEDADVYMPPDADNLGFVTQTTLSVDDTAGVIKRLHERFPNLTAPAADSICYATTNRQEAVKQAAPGCDLFLVVGAPNSSNSKRLVEVALRAGAKKAVLVQRASEIDWSTVGDISMVGLSAGASAPEVIVNEIIEAFRDRYDATVELADTVEENEHFLVNRELRHVELTGADMAFVNGE</sequence>
<name>ISPH_RHIME</name>
<comment type="function">
    <text evidence="1">Catalyzes the conversion of 1-hydroxy-2-methyl-2-(E)-butenyl 4-diphosphate (HMBPP) into a mixture of isopentenyl diphosphate (IPP) and dimethylallyl diphosphate (DMAPP). Acts in the terminal step of the DOXP/MEP pathway for isoprenoid precursor biosynthesis.</text>
</comment>
<comment type="catalytic activity">
    <reaction evidence="1">
        <text>isopentenyl diphosphate + 2 oxidized [2Fe-2S]-[ferredoxin] + H2O = (2E)-4-hydroxy-3-methylbut-2-enyl diphosphate + 2 reduced [2Fe-2S]-[ferredoxin] + 2 H(+)</text>
        <dbReference type="Rhea" id="RHEA:24488"/>
        <dbReference type="Rhea" id="RHEA-COMP:10000"/>
        <dbReference type="Rhea" id="RHEA-COMP:10001"/>
        <dbReference type="ChEBI" id="CHEBI:15377"/>
        <dbReference type="ChEBI" id="CHEBI:15378"/>
        <dbReference type="ChEBI" id="CHEBI:33737"/>
        <dbReference type="ChEBI" id="CHEBI:33738"/>
        <dbReference type="ChEBI" id="CHEBI:128753"/>
        <dbReference type="ChEBI" id="CHEBI:128769"/>
        <dbReference type="EC" id="1.17.7.4"/>
    </reaction>
</comment>
<comment type="catalytic activity">
    <reaction evidence="1">
        <text>dimethylallyl diphosphate + 2 oxidized [2Fe-2S]-[ferredoxin] + H2O = (2E)-4-hydroxy-3-methylbut-2-enyl diphosphate + 2 reduced [2Fe-2S]-[ferredoxin] + 2 H(+)</text>
        <dbReference type="Rhea" id="RHEA:24825"/>
        <dbReference type="Rhea" id="RHEA-COMP:10000"/>
        <dbReference type="Rhea" id="RHEA-COMP:10001"/>
        <dbReference type="ChEBI" id="CHEBI:15377"/>
        <dbReference type="ChEBI" id="CHEBI:15378"/>
        <dbReference type="ChEBI" id="CHEBI:33737"/>
        <dbReference type="ChEBI" id="CHEBI:33738"/>
        <dbReference type="ChEBI" id="CHEBI:57623"/>
        <dbReference type="ChEBI" id="CHEBI:128753"/>
        <dbReference type="EC" id="1.17.7.4"/>
    </reaction>
</comment>
<comment type="cofactor">
    <cofactor evidence="1">
        <name>[4Fe-4S] cluster</name>
        <dbReference type="ChEBI" id="CHEBI:49883"/>
    </cofactor>
    <text evidence="1">Binds 1 [4Fe-4S] cluster per subunit.</text>
</comment>
<comment type="pathway">
    <text evidence="1">Isoprenoid biosynthesis; dimethylallyl diphosphate biosynthesis; dimethylallyl diphosphate from (2E)-4-hydroxy-3-methylbutenyl diphosphate: step 1/1.</text>
</comment>
<comment type="pathway">
    <text evidence="1">Isoprenoid biosynthesis; isopentenyl diphosphate biosynthesis via DXP pathway; isopentenyl diphosphate from 1-deoxy-D-xylulose 5-phosphate: step 6/6.</text>
</comment>
<comment type="similarity">
    <text evidence="1">Belongs to the IspH family.</text>
</comment>
<keyword id="KW-0004">4Fe-4S</keyword>
<keyword id="KW-0408">Iron</keyword>
<keyword id="KW-0411">Iron-sulfur</keyword>
<keyword id="KW-0414">Isoprene biosynthesis</keyword>
<keyword id="KW-0479">Metal-binding</keyword>
<keyword id="KW-0560">Oxidoreductase</keyword>
<keyword id="KW-1185">Reference proteome</keyword>
<evidence type="ECO:0000255" key="1">
    <source>
        <dbReference type="HAMAP-Rule" id="MF_00191"/>
    </source>
</evidence>
<protein>
    <recommendedName>
        <fullName evidence="1">4-hydroxy-3-methylbut-2-enyl diphosphate reductase</fullName>
        <shortName evidence="1">HMBPP reductase</shortName>
        <ecNumber evidence="1">1.17.7.4</ecNumber>
    </recommendedName>
</protein>
<reference key="1">
    <citation type="journal article" date="2001" name="Proc. Natl. Acad. Sci. U.S.A.">
        <title>Analysis of the chromosome sequence of the legume symbiont Sinorhizobium meliloti strain 1021.</title>
        <authorList>
            <person name="Capela D."/>
            <person name="Barloy-Hubler F."/>
            <person name="Gouzy J."/>
            <person name="Bothe G."/>
            <person name="Ampe F."/>
            <person name="Batut J."/>
            <person name="Boistard P."/>
            <person name="Becker A."/>
            <person name="Boutry M."/>
            <person name="Cadieu E."/>
            <person name="Dreano S."/>
            <person name="Gloux S."/>
            <person name="Godrie T."/>
            <person name="Goffeau A."/>
            <person name="Kahn D."/>
            <person name="Kiss E."/>
            <person name="Lelaure V."/>
            <person name="Masuy D."/>
            <person name="Pohl T."/>
            <person name="Portetelle D."/>
            <person name="Puehler A."/>
            <person name="Purnelle B."/>
            <person name="Ramsperger U."/>
            <person name="Renard C."/>
            <person name="Thebault P."/>
            <person name="Vandenbol M."/>
            <person name="Weidner S."/>
            <person name="Galibert F."/>
        </authorList>
    </citation>
    <scope>NUCLEOTIDE SEQUENCE [LARGE SCALE GENOMIC DNA]</scope>
    <source>
        <strain>1021</strain>
    </source>
</reference>
<reference key="2">
    <citation type="journal article" date="2001" name="Science">
        <title>The composite genome of the legume symbiont Sinorhizobium meliloti.</title>
        <authorList>
            <person name="Galibert F."/>
            <person name="Finan T.M."/>
            <person name="Long S.R."/>
            <person name="Puehler A."/>
            <person name="Abola P."/>
            <person name="Ampe F."/>
            <person name="Barloy-Hubler F."/>
            <person name="Barnett M.J."/>
            <person name="Becker A."/>
            <person name="Boistard P."/>
            <person name="Bothe G."/>
            <person name="Boutry M."/>
            <person name="Bowser L."/>
            <person name="Buhrmester J."/>
            <person name="Cadieu E."/>
            <person name="Capela D."/>
            <person name="Chain P."/>
            <person name="Cowie A."/>
            <person name="Davis R.W."/>
            <person name="Dreano S."/>
            <person name="Federspiel N.A."/>
            <person name="Fisher R.F."/>
            <person name="Gloux S."/>
            <person name="Godrie T."/>
            <person name="Goffeau A."/>
            <person name="Golding B."/>
            <person name="Gouzy J."/>
            <person name="Gurjal M."/>
            <person name="Hernandez-Lucas I."/>
            <person name="Hong A."/>
            <person name="Huizar L."/>
            <person name="Hyman R.W."/>
            <person name="Jones T."/>
            <person name="Kahn D."/>
            <person name="Kahn M.L."/>
            <person name="Kalman S."/>
            <person name="Keating D.H."/>
            <person name="Kiss E."/>
            <person name="Komp C."/>
            <person name="Lelaure V."/>
            <person name="Masuy D."/>
            <person name="Palm C."/>
            <person name="Peck M.C."/>
            <person name="Pohl T.M."/>
            <person name="Portetelle D."/>
            <person name="Purnelle B."/>
            <person name="Ramsperger U."/>
            <person name="Surzycki R."/>
            <person name="Thebault P."/>
            <person name="Vandenbol M."/>
            <person name="Vorhoelter F.J."/>
            <person name="Weidner S."/>
            <person name="Wells D.H."/>
            <person name="Wong K."/>
            <person name="Yeh K.-C."/>
            <person name="Batut J."/>
        </authorList>
    </citation>
    <scope>NUCLEOTIDE SEQUENCE [LARGE SCALE GENOMIC DNA]</scope>
    <source>
        <strain>1021</strain>
    </source>
</reference>
<proteinExistence type="inferred from homology"/>
<organism>
    <name type="scientific">Rhizobium meliloti (strain 1021)</name>
    <name type="common">Ensifer meliloti</name>
    <name type="synonym">Sinorhizobium meliloti</name>
    <dbReference type="NCBI Taxonomy" id="266834"/>
    <lineage>
        <taxon>Bacteria</taxon>
        <taxon>Pseudomonadati</taxon>
        <taxon>Pseudomonadota</taxon>
        <taxon>Alphaproteobacteria</taxon>
        <taxon>Hyphomicrobiales</taxon>
        <taxon>Rhizobiaceae</taxon>
        <taxon>Sinorhizobium/Ensifer group</taxon>
        <taxon>Sinorhizobium</taxon>
    </lineage>
</organism>